<dbReference type="EMBL" id="AF525316">
    <property type="protein sequence ID" value="AAM83094.1"/>
    <property type="molecule type" value="mRNA"/>
</dbReference>
<dbReference type="RefSeq" id="NP_999281.1">
    <property type="nucleotide sequence ID" value="NM_214116.1"/>
</dbReference>
<dbReference type="SMR" id="Q8MJ39"/>
<dbReference type="FunCoup" id="Q8MJ39">
    <property type="interactions" value="288"/>
</dbReference>
<dbReference type="STRING" id="9823.ENSSSCP00000065033"/>
<dbReference type="PaxDb" id="9823-ENSSSCP00000000637"/>
<dbReference type="PeptideAtlas" id="Q8MJ39"/>
<dbReference type="Ensembl" id="ENSSSCT00000042794.2">
    <property type="protein sequence ID" value="ENSSSCP00000059606.1"/>
    <property type="gene ID" value="ENSSSCG00000037697.2"/>
</dbReference>
<dbReference type="Ensembl" id="ENSSSCT00015025218.1">
    <property type="protein sequence ID" value="ENSSSCP00015009827.1"/>
    <property type="gene ID" value="ENSSSCG00015018989.1"/>
</dbReference>
<dbReference type="Ensembl" id="ENSSSCT00025065569.1">
    <property type="protein sequence ID" value="ENSSSCP00025027969.1"/>
    <property type="gene ID" value="ENSSSCG00025048192.1"/>
</dbReference>
<dbReference type="Ensembl" id="ENSSSCT00030074614.1">
    <property type="protein sequence ID" value="ENSSSCP00030034135.1"/>
    <property type="gene ID" value="ENSSSCG00030053503.1"/>
</dbReference>
<dbReference type="Ensembl" id="ENSSSCT00040080771.1">
    <property type="protein sequence ID" value="ENSSSCP00040034999.1"/>
    <property type="gene ID" value="ENSSSCG00040059431.1"/>
</dbReference>
<dbReference type="Ensembl" id="ENSSSCT00045036706.1">
    <property type="protein sequence ID" value="ENSSSCP00045025545.1"/>
    <property type="gene ID" value="ENSSSCG00045021392.1"/>
</dbReference>
<dbReference type="Ensembl" id="ENSSSCT00050054353.1">
    <property type="protein sequence ID" value="ENSSSCP00050022924.1"/>
    <property type="gene ID" value="ENSSSCG00050040192.1"/>
</dbReference>
<dbReference type="Ensembl" id="ENSSSCT00055028557.1">
    <property type="protein sequence ID" value="ENSSSCP00055022754.1"/>
    <property type="gene ID" value="ENSSSCG00055014465.1"/>
</dbReference>
<dbReference type="Ensembl" id="ENSSSCT00060002122.1">
    <property type="protein sequence ID" value="ENSSSCP00060000679.1"/>
    <property type="gene ID" value="ENSSSCG00060001719.1"/>
</dbReference>
<dbReference type="Ensembl" id="ENSSSCT00085012088">
    <property type="protein sequence ID" value="ENSSSCP00085008773"/>
    <property type="gene ID" value="ENSSSCG00085006396"/>
</dbReference>
<dbReference type="Ensembl" id="ENSSSCT00090025908">
    <property type="protein sequence ID" value="ENSSSCP00090015960"/>
    <property type="gene ID" value="ENSSSCG00090014771"/>
</dbReference>
<dbReference type="Ensembl" id="ENSSSCT00105011900">
    <property type="protein sequence ID" value="ENSSSCP00105008828"/>
    <property type="gene ID" value="ENSSSCG00105005833"/>
</dbReference>
<dbReference type="Ensembl" id="ENSSSCT00110021748">
    <property type="protein sequence ID" value="ENSSSCP00110014639"/>
    <property type="gene ID" value="ENSSSCG00110011338"/>
</dbReference>
<dbReference type="Ensembl" id="ENSSSCT00115006299">
    <property type="protein sequence ID" value="ENSSSCP00115005888"/>
    <property type="gene ID" value="ENSSSCG00115003686"/>
</dbReference>
<dbReference type="Ensembl" id="ENSSSCT00130037885">
    <property type="protein sequence ID" value="ENSSSCP00130026649"/>
    <property type="gene ID" value="ENSSSCG00130019521"/>
</dbReference>
<dbReference type="GeneID" id="397206"/>
<dbReference type="KEGG" id="ssc:397206"/>
<dbReference type="CTD" id="4256"/>
<dbReference type="VGNC" id="VGNC:90201">
    <property type="gene designation" value="MGP"/>
</dbReference>
<dbReference type="eggNOG" id="ENOG502S45A">
    <property type="taxonomic scope" value="Eukaryota"/>
</dbReference>
<dbReference type="GeneTree" id="ENSGT00390000003753"/>
<dbReference type="HOGENOM" id="CLU_177119_1_0_1"/>
<dbReference type="InParanoid" id="Q8MJ39"/>
<dbReference type="OMA" id="TAFCYES"/>
<dbReference type="OrthoDB" id="8958520at2759"/>
<dbReference type="TreeFam" id="TF330920"/>
<dbReference type="Proteomes" id="UP000008227">
    <property type="component" value="Chromosome 5"/>
</dbReference>
<dbReference type="Proteomes" id="UP000314985">
    <property type="component" value="Unplaced"/>
</dbReference>
<dbReference type="Proteomes" id="UP000694570">
    <property type="component" value="Unplaced"/>
</dbReference>
<dbReference type="Proteomes" id="UP000694571">
    <property type="component" value="Unplaced"/>
</dbReference>
<dbReference type="Proteomes" id="UP000694720">
    <property type="component" value="Unplaced"/>
</dbReference>
<dbReference type="Proteomes" id="UP000694722">
    <property type="component" value="Unplaced"/>
</dbReference>
<dbReference type="Proteomes" id="UP000694723">
    <property type="component" value="Unplaced"/>
</dbReference>
<dbReference type="Proteomes" id="UP000694724">
    <property type="component" value="Unplaced"/>
</dbReference>
<dbReference type="Proteomes" id="UP000694725">
    <property type="component" value="Unplaced"/>
</dbReference>
<dbReference type="Proteomes" id="UP000694726">
    <property type="component" value="Unplaced"/>
</dbReference>
<dbReference type="Proteomes" id="UP000694727">
    <property type="component" value="Unplaced"/>
</dbReference>
<dbReference type="Proteomes" id="UP000694728">
    <property type="component" value="Unplaced"/>
</dbReference>
<dbReference type="Bgee" id="ENSSSCG00000037697">
    <property type="expression patterns" value="Expressed in subcutaneous adipose tissue and 41 other cell types or tissues"/>
</dbReference>
<dbReference type="ExpressionAtlas" id="Q8MJ39">
    <property type="expression patterns" value="baseline and differential"/>
</dbReference>
<dbReference type="GO" id="GO:0031012">
    <property type="term" value="C:extracellular matrix"/>
    <property type="evidence" value="ECO:0000318"/>
    <property type="project" value="GO_Central"/>
</dbReference>
<dbReference type="GO" id="GO:0005576">
    <property type="term" value="C:extracellular region"/>
    <property type="evidence" value="ECO:0007669"/>
    <property type="project" value="UniProtKB-SubCell"/>
</dbReference>
<dbReference type="GO" id="GO:0005509">
    <property type="term" value="F:calcium ion binding"/>
    <property type="evidence" value="ECO:0007669"/>
    <property type="project" value="InterPro"/>
</dbReference>
<dbReference type="GO" id="GO:0051216">
    <property type="term" value="P:cartilage development"/>
    <property type="evidence" value="ECO:0007669"/>
    <property type="project" value="UniProtKB-KW"/>
</dbReference>
<dbReference type="GO" id="GO:0030154">
    <property type="term" value="P:cell differentiation"/>
    <property type="evidence" value="ECO:0007669"/>
    <property type="project" value="UniProtKB-KW"/>
</dbReference>
<dbReference type="GO" id="GO:0001503">
    <property type="term" value="P:ossification"/>
    <property type="evidence" value="ECO:0007669"/>
    <property type="project" value="UniProtKB-KW"/>
</dbReference>
<dbReference type="GO" id="GO:0030500">
    <property type="term" value="P:regulation of bone mineralization"/>
    <property type="evidence" value="ECO:0007669"/>
    <property type="project" value="InterPro"/>
</dbReference>
<dbReference type="InterPro" id="IPR035972">
    <property type="entry name" value="GLA-like_dom_SF"/>
</dbReference>
<dbReference type="InterPro" id="IPR000294">
    <property type="entry name" value="GLA_domain"/>
</dbReference>
<dbReference type="InterPro" id="IPR027118">
    <property type="entry name" value="MGP"/>
</dbReference>
<dbReference type="InterPro" id="IPR002384">
    <property type="entry name" value="Osteocalcin/MGP"/>
</dbReference>
<dbReference type="PANTHER" id="PTHR10109">
    <property type="entry name" value="MATRIX GLA PROTEIN"/>
    <property type="match status" value="1"/>
</dbReference>
<dbReference type="PANTHER" id="PTHR10109:SF0">
    <property type="entry name" value="MATRIX GLA PROTEIN"/>
    <property type="match status" value="1"/>
</dbReference>
<dbReference type="PRINTS" id="PR00002">
    <property type="entry name" value="GLABONE"/>
</dbReference>
<dbReference type="SMART" id="SM00069">
    <property type="entry name" value="GLA"/>
    <property type="match status" value="1"/>
</dbReference>
<dbReference type="SUPFAM" id="SSF57630">
    <property type="entry name" value="GLA-domain"/>
    <property type="match status" value="1"/>
</dbReference>
<dbReference type="PROSITE" id="PS00011">
    <property type="entry name" value="GLA_1"/>
    <property type="match status" value="1"/>
</dbReference>
<dbReference type="PROSITE" id="PS50998">
    <property type="entry name" value="GLA_2"/>
    <property type="match status" value="1"/>
</dbReference>
<comment type="function">
    <text>Associates with the organic matrix of bone and cartilage. Thought to act as an inhibitor of bone formation.</text>
</comment>
<comment type="subcellular location">
    <subcellularLocation>
        <location>Secreted</location>
    </subcellularLocation>
</comment>
<comment type="PTM">
    <text>Requires vitamin K-dependent gamma-carboxylation for its function.</text>
</comment>
<comment type="similarity">
    <text evidence="4">Belongs to the osteocalcin/matrix Gla protein family.</text>
</comment>
<evidence type="ECO:0000250" key="1"/>
<evidence type="ECO:0000250" key="2">
    <source>
        <dbReference type="UniProtKB" id="P07507"/>
    </source>
</evidence>
<evidence type="ECO:0000255" key="3">
    <source>
        <dbReference type="PROSITE-ProRule" id="PRU00463"/>
    </source>
</evidence>
<evidence type="ECO:0000305" key="4"/>
<accession>Q8MJ39</accession>
<organism>
    <name type="scientific">Sus scrofa</name>
    <name type="common">Pig</name>
    <dbReference type="NCBI Taxonomy" id="9823"/>
    <lineage>
        <taxon>Eukaryota</taxon>
        <taxon>Metazoa</taxon>
        <taxon>Chordata</taxon>
        <taxon>Craniata</taxon>
        <taxon>Vertebrata</taxon>
        <taxon>Euteleostomi</taxon>
        <taxon>Mammalia</taxon>
        <taxon>Eutheria</taxon>
        <taxon>Laurasiatheria</taxon>
        <taxon>Artiodactyla</taxon>
        <taxon>Suina</taxon>
        <taxon>Suidae</taxon>
        <taxon>Sus</taxon>
    </lineage>
</organism>
<reference key="1">
    <citation type="submission" date="2002-06" db="EMBL/GenBank/DDBJ databases">
        <title>Identification of Sus scrofa (pig) matrix Gla protein (MGP) by comparative genomics.</title>
        <authorList>
            <person name="Laize V."/>
            <person name="Cancela M.L."/>
        </authorList>
    </citation>
    <scope>NUCLEOTIDE SEQUENCE [MRNA]</scope>
</reference>
<sequence length="103" mass="12142">MKSLLLLSVLAALAVAALCYESHESLESYEINPFLNRRNANTFISPQQRWRAKAQERIRELNKPPYELNREACDDYKLCERYAMVYGYNAAYNRYFRQRPGAK</sequence>
<proteinExistence type="inferred from homology"/>
<gene>
    <name type="primary">MGP</name>
</gene>
<protein>
    <recommendedName>
        <fullName>Matrix Gla protein</fullName>
        <shortName>MGP</shortName>
    </recommendedName>
</protein>
<feature type="signal peptide" evidence="1">
    <location>
        <begin position="1"/>
        <end position="19"/>
    </location>
</feature>
<feature type="chain" id="PRO_0000011112" description="Matrix Gla protein">
    <location>
        <begin position="20"/>
        <end position="103"/>
    </location>
</feature>
<feature type="domain" description="Gla" evidence="3">
    <location>
        <begin position="51"/>
        <end position="97"/>
    </location>
</feature>
<feature type="modified residue" description="4-carboxyglutamate" evidence="2 3">
    <location>
        <position position="21"/>
    </location>
</feature>
<feature type="modified residue" description="Phosphoserine" evidence="2">
    <location>
        <position position="22"/>
    </location>
</feature>
<feature type="modified residue" description="Phosphoserine" evidence="2">
    <location>
        <position position="25"/>
    </location>
</feature>
<feature type="modified residue" description="Phosphoserine" evidence="2">
    <location>
        <position position="28"/>
    </location>
</feature>
<feature type="modified residue" description="4-carboxyglutamate" evidence="2 3">
    <location>
        <position position="56"/>
    </location>
</feature>
<feature type="modified residue" description="4-carboxyglutamate" evidence="2 3">
    <location>
        <position position="60"/>
    </location>
</feature>
<feature type="modified residue" description="4-carboxyglutamate" evidence="2 3">
    <location>
        <position position="67"/>
    </location>
</feature>
<feature type="modified residue" description="4-carboxyglutamate" evidence="2 3">
    <location>
        <position position="71"/>
    </location>
</feature>
<feature type="disulfide bond" evidence="3">
    <location>
        <begin position="73"/>
        <end position="79"/>
    </location>
</feature>
<name>MGP_PIG</name>
<keyword id="KW-0891">Chondrogenesis</keyword>
<keyword id="KW-0217">Developmental protein</keyword>
<keyword id="KW-0221">Differentiation</keyword>
<keyword id="KW-1015">Disulfide bond</keyword>
<keyword id="KW-0301">Gamma-carboxyglutamic acid</keyword>
<keyword id="KW-0892">Osteogenesis</keyword>
<keyword id="KW-0597">Phosphoprotein</keyword>
<keyword id="KW-1185">Reference proteome</keyword>
<keyword id="KW-0964">Secreted</keyword>
<keyword id="KW-0732">Signal</keyword>